<comment type="subunit">
    <text evidence="1">Homotetramer.</text>
</comment>
<comment type="subcellular location">
    <subcellularLocation>
        <location evidence="2">Cytoplasm</location>
    </subcellularLocation>
</comment>
<comment type="similarity">
    <text evidence="2">Belongs to the DapA family.</text>
</comment>
<accession>A9WE23</accession>
<name>DAPAL_CHLAA</name>
<dbReference type="EC" id="4.-.-.-"/>
<dbReference type="EMBL" id="CP000909">
    <property type="protein sequence ID" value="ABY35182.1"/>
    <property type="molecule type" value="Genomic_DNA"/>
</dbReference>
<dbReference type="RefSeq" id="WP_012257836.1">
    <property type="nucleotide sequence ID" value="NC_010175.1"/>
</dbReference>
<dbReference type="RefSeq" id="YP_001635571.1">
    <property type="nucleotide sequence ID" value="NC_010175.1"/>
</dbReference>
<dbReference type="SMR" id="A9WE23"/>
<dbReference type="FunCoup" id="A9WE23">
    <property type="interactions" value="299"/>
</dbReference>
<dbReference type="STRING" id="324602.Caur_1967"/>
<dbReference type="EnsemblBacteria" id="ABY35182">
    <property type="protein sequence ID" value="ABY35182"/>
    <property type="gene ID" value="Caur_1967"/>
</dbReference>
<dbReference type="KEGG" id="cau:Caur_1967"/>
<dbReference type="PATRIC" id="fig|324602.8.peg.2236"/>
<dbReference type="eggNOG" id="COG0329">
    <property type="taxonomic scope" value="Bacteria"/>
</dbReference>
<dbReference type="HOGENOM" id="CLU_049343_5_1_0"/>
<dbReference type="InParanoid" id="A9WE23"/>
<dbReference type="Proteomes" id="UP000002008">
    <property type="component" value="Chromosome"/>
</dbReference>
<dbReference type="GO" id="GO:0005737">
    <property type="term" value="C:cytoplasm"/>
    <property type="evidence" value="ECO:0007669"/>
    <property type="project" value="UniProtKB-SubCell"/>
</dbReference>
<dbReference type="GO" id="GO:0008840">
    <property type="term" value="F:4-hydroxy-tetrahydrodipicolinate synthase activity"/>
    <property type="evidence" value="ECO:0000318"/>
    <property type="project" value="GO_Central"/>
</dbReference>
<dbReference type="CDD" id="cd00408">
    <property type="entry name" value="DHDPS-like"/>
    <property type="match status" value="1"/>
</dbReference>
<dbReference type="Gene3D" id="3.20.20.70">
    <property type="entry name" value="Aldolase class I"/>
    <property type="match status" value="1"/>
</dbReference>
<dbReference type="InterPro" id="IPR013785">
    <property type="entry name" value="Aldolase_TIM"/>
</dbReference>
<dbReference type="InterPro" id="IPR002220">
    <property type="entry name" value="DapA-like"/>
</dbReference>
<dbReference type="InterPro" id="IPR020624">
    <property type="entry name" value="Schiff_base-form_aldolases_CS"/>
</dbReference>
<dbReference type="PANTHER" id="PTHR12128:SF67">
    <property type="entry name" value="BLR3884 PROTEIN"/>
    <property type="match status" value="1"/>
</dbReference>
<dbReference type="PANTHER" id="PTHR12128">
    <property type="entry name" value="DIHYDRODIPICOLINATE SYNTHASE"/>
    <property type="match status" value="1"/>
</dbReference>
<dbReference type="Pfam" id="PF00701">
    <property type="entry name" value="DHDPS"/>
    <property type="match status" value="1"/>
</dbReference>
<dbReference type="PIRSF" id="PIRSF001365">
    <property type="entry name" value="DHDPS"/>
    <property type="match status" value="1"/>
</dbReference>
<dbReference type="PRINTS" id="PR00146">
    <property type="entry name" value="DHPICSNTHASE"/>
</dbReference>
<dbReference type="SMART" id="SM01130">
    <property type="entry name" value="DHDPS"/>
    <property type="match status" value="1"/>
</dbReference>
<dbReference type="SUPFAM" id="SSF51569">
    <property type="entry name" value="Aldolase"/>
    <property type="match status" value="1"/>
</dbReference>
<dbReference type="PROSITE" id="PS00665">
    <property type="entry name" value="DHDPS_1"/>
    <property type="match status" value="1"/>
</dbReference>
<organism>
    <name type="scientific">Chloroflexus aurantiacus (strain ATCC 29366 / DSM 635 / J-10-fl)</name>
    <dbReference type="NCBI Taxonomy" id="324602"/>
    <lineage>
        <taxon>Bacteria</taxon>
        <taxon>Bacillati</taxon>
        <taxon>Chloroflexota</taxon>
        <taxon>Chloroflexia</taxon>
        <taxon>Chloroflexales</taxon>
        <taxon>Chloroflexineae</taxon>
        <taxon>Chloroflexaceae</taxon>
        <taxon>Chloroflexus</taxon>
    </lineage>
</organism>
<protein>
    <recommendedName>
        <fullName>Uncharacterized DapA-like lyase Caur_1967</fullName>
        <ecNumber>4.-.-.-</ecNumber>
    </recommendedName>
</protein>
<reference key="1">
    <citation type="journal article" date="2011" name="BMC Genomics">
        <title>Complete genome sequence of the filamentous anoxygenic phototrophic bacterium Chloroflexus aurantiacus.</title>
        <authorList>
            <person name="Tang K.H."/>
            <person name="Barry K."/>
            <person name="Chertkov O."/>
            <person name="Dalin E."/>
            <person name="Han C.S."/>
            <person name="Hauser L.J."/>
            <person name="Honchak B.M."/>
            <person name="Karbach L.E."/>
            <person name="Land M.L."/>
            <person name="Lapidus A."/>
            <person name="Larimer F.W."/>
            <person name="Mikhailova N."/>
            <person name="Pitluck S."/>
            <person name="Pierson B.K."/>
            <person name="Blankenship R.E."/>
        </authorList>
    </citation>
    <scope>NUCLEOTIDE SEQUENCE [LARGE SCALE GENOMIC DNA]</scope>
    <source>
        <strain>ATCC 29366 / DSM 635 / J-10-fl</strain>
    </source>
</reference>
<gene>
    <name type="ordered locus">Caur_1967</name>
</gene>
<keyword id="KW-0963">Cytoplasm</keyword>
<keyword id="KW-0456">Lyase</keyword>
<keyword id="KW-1185">Reference proteome</keyword>
<keyword id="KW-0704">Schiff base</keyword>
<evidence type="ECO:0000250" key="1"/>
<evidence type="ECO:0000305" key="2"/>
<proteinExistence type="inferred from homology"/>
<feature type="chain" id="PRO_0000340941" description="Uncharacterized DapA-like lyase Caur_1967">
    <location>
        <begin position="1"/>
        <end position="299"/>
    </location>
</feature>
<feature type="active site" description="Charge relay system" evidence="1">
    <location>
        <position position="47"/>
    </location>
</feature>
<feature type="active site" description="Charge relay system" evidence="1">
    <location>
        <position position="109"/>
    </location>
</feature>
<feature type="active site" description="Proton donor" evidence="1">
    <location>
        <position position="138"/>
    </location>
</feature>
<feature type="active site" description="Schiff-base intermediate with substrate" evidence="1">
    <location>
        <position position="168"/>
    </location>
</feature>
<sequence length="299" mass="31677">MAEPRGIISAMLTPFTSDVGPVDYEWLPGYLRFLADGGLHGVLALGTTGEGPSMSVAERIRTLEIIMAHRGELSVIAGTGCAALTDTIALSRAAIDLGVDAILVMPPFYIKQPDETGILAYFRALCDALPADARVMLYHIPQVTGVPITRTIIDGLLASHGTQFYGLKDSSGDWEHSKMLIDSYPQLRIFTGSDRLIARALAGGAAGAITALSSAFPKLARAVFDAFHQGGDVAAAQARLSAVRDLVNPINTPPALKAALTWTSDLPETALRLPLLPLSNEEVAALRAAYERIMAGTTP</sequence>